<gene>
    <name evidence="1" type="primary">rpmI</name>
    <name type="ordered locus">MS1055</name>
</gene>
<proteinExistence type="inferred from homology"/>
<organism>
    <name type="scientific">Mannheimia succiniciproducens (strain KCTC 0769BP / MBEL55E)</name>
    <dbReference type="NCBI Taxonomy" id="221988"/>
    <lineage>
        <taxon>Bacteria</taxon>
        <taxon>Pseudomonadati</taxon>
        <taxon>Pseudomonadota</taxon>
        <taxon>Gammaproteobacteria</taxon>
        <taxon>Pasteurellales</taxon>
        <taxon>Pasteurellaceae</taxon>
        <taxon>Basfia</taxon>
    </lineage>
</organism>
<keyword id="KW-0687">Ribonucleoprotein</keyword>
<keyword id="KW-0689">Ribosomal protein</keyword>
<accession>Q65TP8</accession>
<feature type="chain" id="PRO_0000258699" description="Large ribosomal subunit protein bL35">
    <location>
        <begin position="1"/>
        <end position="65"/>
    </location>
</feature>
<feature type="region of interest" description="Disordered" evidence="2">
    <location>
        <begin position="1"/>
        <end position="26"/>
    </location>
</feature>
<feature type="compositionally biased region" description="Basic residues" evidence="2">
    <location>
        <begin position="10"/>
        <end position="26"/>
    </location>
</feature>
<evidence type="ECO:0000255" key="1">
    <source>
        <dbReference type="HAMAP-Rule" id="MF_00514"/>
    </source>
</evidence>
<evidence type="ECO:0000256" key="2">
    <source>
        <dbReference type="SAM" id="MobiDB-lite"/>
    </source>
</evidence>
<evidence type="ECO:0000305" key="3"/>
<sequence>MPKIKTVRGAAKRFKKTASGGFKRKQSHLRHILTKKTTKRKRHLRHKSMVAKADQVLVVACLPYV</sequence>
<protein>
    <recommendedName>
        <fullName evidence="1">Large ribosomal subunit protein bL35</fullName>
    </recommendedName>
    <alternativeName>
        <fullName evidence="3">50S ribosomal protein L35</fullName>
    </alternativeName>
</protein>
<name>RL35_MANSM</name>
<reference key="1">
    <citation type="journal article" date="2004" name="Nat. Biotechnol.">
        <title>The genome sequence of the capnophilic rumen bacterium Mannheimia succiniciproducens.</title>
        <authorList>
            <person name="Hong S.H."/>
            <person name="Kim J.S."/>
            <person name="Lee S.Y."/>
            <person name="In Y.H."/>
            <person name="Choi S.S."/>
            <person name="Rih J.-K."/>
            <person name="Kim C.H."/>
            <person name="Jeong H."/>
            <person name="Hur C.G."/>
            <person name="Kim J.J."/>
        </authorList>
    </citation>
    <scope>NUCLEOTIDE SEQUENCE [LARGE SCALE GENOMIC DNA]</scope>
    <source>
        <strain>KCTC 0769BP / MBEL55E</strain>
    </source>
</reference>
<comment type="similarity">
    <text evidence="1">Belongs to the bacterial ribosomal protein bL35 family.</text>
</comment>
<comment type="sequence caution" evidence="3">
    <conflict type="erroneous initiation">
        <sequence resource="EMBL-CDS" id="AAU37662"/>
    </conflict>
</comment>
<dbReference type="EMBL" id="AE016827">
    <property type="protein sequence ID" value="AAU37662.1"/>
    <property type="status" value="ALT_INIT"/>
    <property type="molecule type" value="Genomic_DNA"/>
</dbReference>
<dbReference type="RefSeq" id="WP_011200231.1">
    <property type="nucleotide sequence ID" value="NC_006300.1"/>
</dbReference>
<dbReference type="SMR" id="Q65TP8"/>
<dbReference type="STRING" id="221988.MS1055"/>
<dbReference type="KEGG" id="msu:MS1055"/>
<dbReference type="eggNOG" id="COG0291">
    <property type="taxonomic scope" value="Bacteria"/>
</dbReference>
<dbReference type="HOGENOM" id="CLU_169643_1_1_6"/>
<dbReference type="Proteomes" id="UP000000607">
    <property type="component" value="Chromosome"/>
</dbReference>
<dbReference type="GO" id="GO:0022625">
    <property type="term" value="C:cytosolic large ribosomal subunit"/>
    <property type="evidence" value="ECO:0007669"/>
    <property type="project" value="TreeGrafter"/>
</dbReference>
<dbReference type="GO" id="GO:0003735">
    <property type="term" value="F:structural constituent of ribosome"/>
    <property type="evidence" value="ECO:0007669"/>
    <property type="project" value="InterPro"/>
</dbReference>
<dbReference type="GO" id="GO:0006412">
    <property type="term" value="P:translation"/>
    <property type="evidence" value="ECO:0007669"/>
    <property type="project" value="UniProtKB-UniRule"/>
</dbReference>
<dbReference type="FunFam" id="4.10.410.60:FF:000001">
    <property type="entry name" value="50S ribosomal protein L35"/>
    <property type="match status" value="1"/>
</dbReference>
<dbReference type="Gene3D" id="4.10.410.60">
    <property type="match status" value="1"/>
</dbReference>
<dbReference type="HAMAP" id="MF_00514">
    <property type="entry name" value="Ribosomal_bL35"/>
    <property type="match status" value="1"/>
</dbReference>
<dbReference type="InterPro" id="IPR001706">
    <property type="entry name" value="Ribosomal_bL35"/>
</dbReference>
<dbReference type="InterPro" id="IPR021137">
    <property type="entry name" value="Ribosomal_bL35-like"/>
</dbReference>
<dbReference type="InterPro" id="IPR018265">
    <property type="entry name" value="Ribosomal_bL35_CS"/>
</dbReference>
<dbReference type="InterPro" id="IPR037229">
    <property type="entry name" value="Ribosomal_bL35_sf"/>
</dbReference>
<dbReference type="NCBIfam" id="TIGR00001">
    <property type="entry name" value="rpmI_bact"/>
    <property type="match status" value="1"/>
</dbReference>
<dbReference type="PANTHER" id="PTHR33343">
    <property type="entry name" value="54S RIBOSOMAL PROTEIN BL35M"/>
    <property type="match status" value="1"/>
</dbReference>
<dbReference type="PANTHER" id="PTHR33343:SF1">
    <property type="entry name" value="LARGE RIBOSOMAL SUBUNIT PROTEIN BL35M"/>
    <property type="match status" value="1"/>
</dbReference>
<dbReference type="Pfam" id="PF01632">
    <property type="entry name" value="Ribosomal_L35p"/>
    <property type="match status" value="1"/>
</dbReference>
<dbReference type="PRINTS" id="PR00064">
    <property type="entry name" value="RIBOSOMALL35"/>
</dbReference>
<dbReference type="SUPFAM" id="SSF143034">
    <property type="entry name" value="L35p-like"/>
    <property type="match status" value="1"/>
</dbReference>
<dbReference type="PROSITE" id="PS00936">
    <property type="entry name" value="RIBOSOMAL_L35"/>
    <property type="match status" value="1"/>
</dbReference>